<comment type="function">
    <text evidence="1">May be involved in both secretory and endocytic intracellular trafficking in the endosomal/prevacuolar compartments.</text>
</comment>
<comment type="subunit">
    <text evidence="4">Interacts with PRA1B1, PRA1B2, PRA1B4, PRA1B5, PRA1B6 and PRA1E.</text>
</comment>
<comment type="subcellular location">
    <subcellularLocation>
        <location evidence="4">Endosome membrane</location>
        <topology evidence="4">Multi-pass membrane protein</topology>
    </subcellularLocation>
</comment>
<comment type="tissue specificity">
    <text evidence="4">Expressed in hypocotyls and shoot apex.</text>
</comment>
<comment type="similarity">
    <text evidence="5">Belongs to the PRA1 family.</text>
</comment>
<comment type="sequence caution" evidence="5">
    <conflict type="erroneous initiation">
        <sequence resource="EMBL-CDS" id="CAC80645"/>
    </conflict>
</comment>
<keyword id="KW-0967">Endosome</keyword>
<keyword id="KW-0472">Membrane</keyword>
<keyword id="KW-1185">Reference proteome</keyword>
<keyword id="KW-0812">Transmembrane</keyword>
<keyword id="KW-1133">Transmembrane helix</keyword>
<keyword id="KW-0813">Transport</keyword>
<organism>
    <name type="scientific">Arabidopsis thaliana</name>
    <name type="common">Mouse-ear cress</name>
    <dbReference type="NCBI Taxonomy" id="3702"/>
    <lineage>
        <taxon>Eukaryota</taxon>
        <taxon>Viridiplantae</taxon>
        <taxon>Streptophyta</taxon>
        <taxon>Embryophyta</taxon>
        <taxon>Tracheophyta</taxon>
        <taxon>Spermatophyta</taxon>
        <taxon>Magnoliopsida</taxon>
        <taxon>eudicotyledons</taxon>
        <taxon>Gunneridae</taxon>
        <taxon>Pentapetalae</taxon>
        <taxon>rosids</taxon>
        <taxon>malvids</taxon>
        <taxon>Brassicales</taxon>
        <taxon>Brassicaceae</taxon>
        <taxon>Camelineae</taxon>
        <taxon>Arabidopsis</taxon>
    </lineage>
</organism>
<dbReference type="EMBL" id="AJ249727">
    <property type="protein sequence ID" value="CAC80645.1"/>
    <property type="status" value="ALT_INIT"/>
    <property type="molecule type" value="mRNA"/>
</dbReference>
<dbReference type="EMBL" id="AB010692">
    <property type="protein sequence ID" value="BAB09981.1"/>
    <property type="molecule type" value="Genomic_DNA"/>
</dbReference>
<dbReference type="EMBL" id="CP002688">
    <property type="protein sequence ID" value="AED90867.1"/>
    <property type="molecule type" value="Genomic_DNA"/>
</dbReference>
<dbReference type="EMBL" id="AK175650">
    <property type="protein sequence ID" value="BAD43413.1"/>
    <property type="molecule type" value="mRNA"/>
</dbReference>
<dbReference type="EMBL" id="AK176498">
    <property type="protein sequence ID" value="BAD44261.1"/>
    <property type="molecule type" value="mRNA"/>
</dbReference>
<dbReference type="EMBL" id="AK176635">
    <property type="protein sequence ID" value="BAD44398.1"/>
    <property type="molecule type" value="mRNA"/>
</dbReference>
<dbReference type="EMBL" id="BT025281">
    <property type="protein sequence ID" value="ABF19034.1"/>
    <property type="molecule type" value="mRNA"/>
</dbReference>
<dbReference type="RefSeq" id="NP_001318484.1">
    <property type="nucleotide sequence ID" value="NM_001342816.1"/>
</dbReference>
<dbReference type="FunCoup" id="Q9FLB6">
    <property type="interactions" value="1733"/>
</dbReference>
<dbReference type="STRING" id="3702.Q9FLB6"/>
<dbReference type="GlyGen" id="Q9FLB6">
    <property type="glycosylation" value="1 site"/>
</dbReference>
<dbReference type="PaxDb" id="3702-AT5G05380.1"/>
<dbReference type="ProteomicsDB" id="226411"/>
<dbReference type="EnsemblPlants" id="AT5G05380.1">
    <property type="protein sequence ID" value="AT5G05380.1"/>
    <property type="gene ID" value="AT5G05380"/>
</dbReference>
<dbReference type="GeneID" id="830420"/>
<dbReference type="Gramene" id="AT5G05380.1">
    <property type="protein sequence ID" value="AT5G05380.1"/>
    <property type="gene ID" value="AT5G05380"/>
</dbReference>
<dbReference type="KEGG" id="ath:AT5G05380"/>
<dbReference type="Araport" id="AT5G05380"/>
<dbReference type="TAIR" id="AT5G05380">
    <property type="gene designation" value="PRA1.B3"/>
</dbReference>
<dbReference type="eggNOG" id="KOG3142">
    <property type="taxonomic scope" value="Eukaryota"/>
</dbReference>
<dbReference type="HOGENOM" id="CLU_060198_1_0_1"/>
<dbReference type="InParanoid" id="Q9FLB6"/>
<dbReference type="PhylomeDB" id="Q9FLB6"/>
<dbReference type="PRO" id="PR:Q9FLB6"/>
<dbReference type="Proteomes" id="UP000006548">
    <property type="component" value="Chromosome 5"/>
</dbReference>
<dbReference type="ExpressionAtlas" id="Q9FLB6">
    <property type="expression patterns" value="baseline and differential"/>
</dbReference>
<dbReference type="GO" id="GO:0005783">
    <property type="term" value="C:endoplasmic reticulum"/>
    <property type="evidence" value="ECO:0000314"/>
    <property type="project" value="TAIR"/>
</dbReference>
<dbReference type="GO" id="GO:0010008">
    <property type="term" value="C:endosome membrane"/>
    <property type="evidence" value="ECO:0007669"/>
    <property type="project" value="UniProtKB-SubCell"/>
</dbReference>
<dbReference type="GO" id="GO:0016192">
    <property type="term" value="P:vesicle-mediated transport"/>
    <property type="evidence" value="ECO:0000314"/>
    <property type="project" value="TAIR"/>
</dbReference>
<dbReference type="InterPro" id="IPR004895">
    <property type="entry name" value="Prenylated_rab_accept_PRA1"/>
</dbReference>
<dbReference type="PANTHER" id="PTHR19317:SF92">
    <property type="entry name" value="PRA1 FAMILY PROTEIN B3"/>
    <property type="match status" value="1"/>
</dbReference>
<dbReference type="PANTHER" id="PTHR19317">
    <property type="entry name" value="PRENYLATED RAB ACCEPTOR 1-RELATED"/>
    <property type="match status" value="1"/>
</dbReference>
<dbReference type="Pfam" id="PF03208">
    <property type="entry name" value="PRA1"/>
    <property type="match status" value="1"/>
</dbReference>
<sequence length="217" mass="23529">MMANPPTLPISDHSGGGSQSQQPVSTPAFRTFLSRLSSSIRQSLSQRRPWLELVDRSAISRPESLTDAYSRIRRNLPYFKVNYVTIVSLVLALSLLSHPFSLLVLLCLFCAWIFLYLFRPSDQPLVVLGRTFSDRETLGVLVILTIVVVFLTSVGSLLTSALMIGFGIVCLHGAFRVPEDLFLDDQEPANTGLLSFLSGAATSAAVAAASTPASGRV</sequence>
<gene>
    <name type="primary">PRA1B3</name>
    <name type="synonym">PRA2</name>
    <name type="ordered locus">At5g05380</name>
    <name type="ORF">K18I23.19</name>
</gene>
<proteinExistence type="evidence at protein level"/>
<reference key="1">
    <citation type="submission" date="1999-09" db="EMBL/GenBank/DDBJ databases">
        <title>Isolation and characterization of members of a new protein family from Arabidopsis thaliana that specifically interact with prenylated Rab proteins and SNAREs.</title>
        <authorList>
            <person name="Pay A."/>
            <person name="Nagy F."/>
            <person name="Merkle T."/>
        </authorList>
    </citation>
    <scope>NUCLEOTIDE SEQUENCE [MRNA]</scope>
    <source>
        <strain>cv. Columbia</strain>
    </source>
</reference>
<reference key="2">
    <citation type="journal article" date="1998" name="DNA Res.">
        <title>Structural analysis of Arabidopsis thaliana chromosome 5. V. Sequence features of the regions of 1,381,565 bp covered by twenty one physically assigned P1 and TAC clones.</title>
        <authorList>
            <person name="Kaneko T."/>
            <person name="Kotani H."/>
            <person name="Nakamura Y."/>
            <person name="Sato S."/>
            <person name="Asamizu E."/>
            <person name="Miyajima N."/>
            <person name="Tabata S."/>
        </authorList>
    </citation>
    <scope>NUCLEOTIDE SEQUENCE [LARGE SCALE GENOMIC DNA]</scope>
    <source>
        <strain>cv. Columbia</strain>
    </source>
</reference>
<reference key="3">
    <citation type="journal article" date="2017" name="Plant J.">
        <title>Araport11: a complete reannotation of the Arabidopsis thaliana reference genome.</title>
        <authorList>
            <person name="Cheng C.Y."/>
            <person name="Krishnakumar V."/>
            <person name="Chan A.P."/>
            <person name="Thibaud-Nissen F."/>
            <person name="Schobel S."/>
            <person name="Town C.D."/>
        </authorList>
    </citation>
    <scope>GENOME REANNOTATION</scope>
    <source>
        <strain>cv. Columbia</strain>
    </source>
</reference>
<reference key="4">
    <citation type="submission" date="2004-09" db="EMBL/GenBank/DDBJ databases">
        <title>Large-scale analysis of RIKEN Arabidopsis full-length (RAFL) cDNAs.</title>
        <authorList>
            <person name="Totoki Y."/>
            <person name="Seki M."/>
            <person name="Ishida J."/>
            <person name="Nakajima M."/>
            <person name="Enju A."/>
            <person name="Kamiya A."/>
            <person name="Narusaka M."/>
            <person name="Shin-i T."/>
            <person name="Nakagawa M."/>
            <person name="Sakamoto N."/>
            <person name="Oishi K."/>
            <person name="Kohara Y."/>
            <person name="Kobayashi M."/>
            <person name="Toyoda A."/>
            <person name="Sakaki Y."/>
            <person name="Sakurai T."/>
            <person name="Iida K."/>
            <person name="Akiyama K."/>
            <person name="Satou M."/>
            <person name="Toyoda T."/>
            <person name="Konagaya A."/>
            <person name="Carninci P."/>
            <person name="Kawai J."/>
            <person name="Hayashizaki Y."/>
            <person name="Shinozaki K."/>
        </authorList>
    </citation>
    <scope>NUCLEOTIDE SEQUENCE [LARGE SCALE MRNA]</scope>
    <source>
        <strain>cv. Columbia</strain>
    </source>
</reference>
<reference key="5">
    <citation type="submission" date="2006-04" db="EMBL/GenBank/DDBJ databases">
        <title>Arabidopsis ORF clones.</title>
        <authorList>
            <person name="Shinn P."/>
            <person name="Chen H."/>
            <person name="Kim C.J."/>
            <person name="Ecker J.R."/>
        </authorList>
    </citation>
    <scope>NUCLEOTIDE SEQUENCE [LARGE SCALE MRNA]</scope>
    <source>
        <strain>cv. Columbia</strain>
    </source>
</reference>
<reference key="6">
    <citation type="journal article" date="2008" name="Plant Physiol.">
        <title>The PRA1 gene family in Arabidopsis.</title>
        <authorList>
            <person name="Alvim Kamei C.L."/>
            <person name="Boruc J."/>
            <person name="Vandepoele K."/>
            <person name="Van den Daele H."/>
            <person name="Maes S."/>
            <person name="Russinova E."/>
            <person name="Inze D."/>
            <person name="de Veylder L."/>
        </authorList>
    </citation>
    <scope>SUBCELLULAR LOCATION</scope>
    <scope>TISSUE SPECIFICITY</scope>
    <scope>INTERACTION WITH PRA1B1; PRA1B2; PRA1B4; PRA1B5; PRA1B6 AND PRA1E</scope>
    <scope>GENE FAMILY</scope>
    <scope>NOMENCLATURE</scope>
</reference>
<feature type="chain" id="PRO_0000352252" description="PRA1 family protein B3">
    <location>
        <begin position="1"/>
        <end position="217"/>
    </location>
</feature>
<feature type="transmembrane region" description="Helical" evidence="2">
    <location>
        <begin position="76"/>
        <end position="96"/>
    </location>
</feature>
<feature type="transmembrane region" description="Helical" evidence="2">
    <location>
        <begin position="98"/>
        <end position="118"/>
    </location>
</feature>
<feature type="transmembrane region" description="Helical" evidence="2">
    <location>
        <begin position="138"/>
        <end position="158"/>
    </location>
</feature>
<feature type="transmembrane region" description="Helical" evidence="2">
    <location>
        <begin position="162"/>
        <end position="182"/>
    </location>
</feature>
<feature type="transmembrane region" description="Helical" evidence="2">
    <location>
        <begin position="193"/>
        <end position="213"/>
    </location>
</feature>
<feature type="region of interest" description="Disordered" evidence="3">
    <location>
        <begin position="1"/>
        <end position="24"/>
    </location>
</feature>
<name>PR1B3_ARATH</name>
<protein>
    <recommendedName>
        <fullName>PRA1 family protein B3</fullName>
        <shortName>AtPRA1.B3</shortName>
    </recommendedName>
    <alternativeName>
        <fullName>Prenylated Rab acceptor 2</fullName>
    </alternativeName>
</protein>
<accession>Q9FLB6</accession>
<accession>Q8W042</accession>
<evidence type="ECO:0000250" key="1"/>
<evidence type="ECO:0000255" key="2"/>
<evidence type="ECO:0000256" key="3">
    <source>
        <dbReference type="SAM" id="MobiDB-lite"/>
    </source>
</evidence>
<evidence type="ECO:0000269" key="4">
    <source>
    </source>
</evidence>
<evidence type="ECO:0000305" key="5"/>